<proteinExistence type="evidence at protein level"/>
<accession>P39778</accession>
<name>CLPY_BACSU</name>
<evidence type="ECO:0000250" key="1"/>
<evidence type="ECO:0000269" key="2">
    <source>
    </source>
</evidence>
<evidence type="ECO:0000305" key="3"/>
<sequence length="467" mass="52586">MEKKPLTPRQIVDRLDQYIVGQQNAKKAVAVALRNRYRRSLLDEKLKDEVVPKNILMMGPTGVGKTEIARRIAKLSGAPFIKIEATKFTEVGYVGRDVESMVRDLVETSVRLIKEEKMNEVKEQAEENANKRIVRLLVPGKKKQSGVKNPFEMFFGGSQPNGEDEAESQEEANIEEKRKRMAHQLALGELEDYYVTVEVEEQQPSMFDMLQGSGMEQMGMNMQDALSGLMPKKKKRRKMTVREARKVLTNEEASKLIDMDEVGQEAVQRAEESGIIFIDEIDKIAKNGGASSSADVSREGVQRDILPIVEGSTVVTKYGSVKTDHVLFIAAGAFHMAKPSDLIPELQGRFPIRVELNKLTVDDFVRILVEPDNALLKQYQALLQTEGISLEFSDEAIHKIAEVAYHVNQDTDNIGARRLHTILERLLEDLSFEAPDVTMEKITITPQYVEEKLGTIAKNKDLSQFIL</sequence>
<reference key="1">
    <citation type="journal article" date="1995" name="Mol. Microbiol.">
        <title>A gene required for nutritional repression of the Bacillus subtilis dipeptide permease operon.</title>
        <authorList>
            <person name="Slack F.J."/>
            <person name="Serror P."/>
            <person name="Joyce E."/>
            <person name="Sonenshein A.L."/>
        </authorList>
    </citation>
    <scope>NUCLEOTIDE SEQUENCE [GENOMIC DNA]</scope>
    <source>
        <strain>168 / JH642</strain>
    </source>
</reference>
<reference key="2">
    <citation type="journal article" date="1997" name="Nature">
        <title>The complete genome sequence of the Gram-positive bacterium Bacillus subtilis.</title>
        <authorList>
            <person name="Kunst F."/>
            <person name="Ogasawara N."/>
            <person name="Moszer I."/>
            <person name="Albertini A.M."/>
            <person name="Alloni G."/>
            <person name="Azevedo V."/>
            <person name="Bertero M.G."/>
            <person name="Bessieres P."/>
            <person name="Bolotin A."/>
            <person name="Borchert S."/>
            <person name="Borriss R."/>
            <person name="Boursier L."/>
            <person name="Brans A."/>
            <person name="Braun M."/>
            <person name="Brignell S.C."/>
            <person name="Bron S."/>
            <person name="Brouillet S."/>
            <person name="Bruschi C.V."/>
            <person name="Caldwell B."/>
            <person name="Capuano V."/>
            <person name="Carter N.M."/>
            <person name="Choi S.-K."/>
            <person name="Codani J.-J."/>
            <person name="Connerton I.F."/>
            <person name="Cummings N.J."/>
            <person name="Daniel R.A."/>
            <person name="Denizot F."/>
            <person name="Devine K.M."/>
            <person name="Duesterhoeft A."/>
            <person name="Ehrlich S.D."/>
            <person name="Emmerson P.T."/>
            <person name="Entian K.-D."/>
            <person name="Errington J."/>
            <person name="Fabret C."/>
            <person name="Ferrari E."/>
            <person name="Foulger D."/>
            <person name="Fritz C."/>
            <person name="Fujita M."/>
            <person name="Fujita Y."/>
            <person name="Fuma S."/>
            <person name="Galizzi A."/>
            <person name="Galleron N."/>
            <person name="Ghim S.-Y."/>
            <person name="Glaser P."/>
            <person name="Goffeau A."/>
            <person name="Golightly E.J."/>
            <person name="Grandi G."/>
            <person name="Guiseppi G."/>
            <person name="Guy B.J."/>
            <person name="Haga K."/>
            <person name="Haiech J."/>
            <person name="Harwood C.R."/>
            <person name="Henaut A."/>
            <person name="Hilbert H."/>
            <person name="Holsappel S."/>
            <person name="Hosono S."/>
            <person name="Hullo M.-F."/>
            <person name="Itaya M."/>
            <person name="Jones L.-M."/>
            <person name="Joris B."/>
            <person name="Karamata D."/>
            <person name="Kasahara Y."/>
            <person name="Klaerr-Blanchard M."/>
            <person name="Klein C."/>
            <person name="Kobayashi Y."/>
            <person name="Koetter P."/>
            <person name="Koningstein G."/>
            <person name="Krogh S."/>
            <person name="Kumano M."/>
            <person name="Kurita K."/>
            <person name="Lapidus A."/>
            <person name="Lardinois S."/>
            <person name="Lauber J."/>
            <person name="Lazarevic V."/>
            <person name="Lee S.-M."/>
            <person name="Levine A."/>
            <person name="Liu H."/>
            <person name="Masuda S."/>
            <person name="Mauel C."/>
            <person name="Medigue C."/>
            <person name="Medina N."/>
            <person name="Mellado R.P."/>
            <person name="Mizuno M."/>
            <person name="Moestl D."/>
            <person name="Nakai S."/>
            <person name="Noback M."/>
            <person name="Noone D."/>
            <person name="O'Reilly M."/>
            <person name="Ogawa K."/>
            <person name="Ogiwara A."/>
            <person name="Oudega B."/>
            <person name="Park S.-H."/>
            <person name="Parro V."/>
            <person name="Pohl T.M."/>
            <person name="Portetelle D."/>
            <person name="Porwollik S."/>
            <person name="Prescott A.M."/>
            <person name="Presecan E."/>
            <person name="Pujic P."/>
            <person name="Purnelle B."/>
            <person name="Rapoport G."/>
            <person name="Rey M."/>
            <person name="Reynolds S."/>
            <person name="Rieger M."/>
            <person name="Rivolta C."/>
            <person name="Rocha E."/>
            <person name="Roche B."/>
            <person name="Rose M."/>
            <person name="Sadaie Y."/>
            <person name="Sato T."/>
            <person name="Scanlan E."/>
            <person name="Schleich S."/>
            <person name="Schroeter R."/>
            <person name="Scoffone F."/>
            <person name="Sekiguchi J."/>
            <person name="Sekowska A."/>
            <person name="Seror S.J."/>
            <person name="Serror P."/>
            <person name="Shin B.-S."/>
            <person name="Soldo B."/>
            <person name="Sorokin A."/>
            <person name="Tacconi E."/>
            <person name="Takagi T."/>
            <person name="Takahashi H."/>
            <person name="Takemaru K."/>
            <person name="Takeuchi M."/>
            <person name="Tamakoshi A."/>
            <person name="Tanaka T."/>
            <person name="Terpstra P."/>
            <person name="Tognoni A."/>
            <person name="Tosato V."/>
            <person name="Uchiyama S."/>
            <person name="Vandenbol M."/>
            <person name="Vannier F."/>
            <person name="Vassarotti A."/>
            <person name="Viari A."/>
            <person name="Wambutt R."/>
            <person name="Wedler E."/>
            <person name="Wedler H."/>
            <person name="Weitzenegger T."/>
            <person name="Winters P."/>
            <person name="Wipat A."/>
            <person name="Yamamoto H."/>
            <person name="Yamane K."/>
            <person name="Yasumoto K."/>
            <person name="Yata K."/>
            <person name="Yoshida K."/>
            <person name="Yoshikawa H.-F."/>
            <person name="Zumstein E."/>
            <person name="Yoshikawa H."/>
            <person name="Danchin A."/>
        </authorList>
    </citation>
    <scope>NUCLEOTIDE SEQUENCE [LARGE SCALE GENOMIC DNA]</scope>
    <source>
        <strain>168</strain>
    </source>
</reference>
<reference key="3">
    <citation type="journal article" date="2001" name="EMBO J.">
        <title>The ATP-dependent CodWX (HslVU) protease in Bacillus subtilis is an N-terminal serine protease.</title>
        <authorList>
            <person name="Kang M.S."/>
            <person name="Lim B.K."/>
            <person name="Seong I.S."/>
            <person name="Seol J.H."/>
            <person name="Tanahashi N."/>
            <person name="Tanaka K."/>
            <person name="Chung C.H."/>
        </authorList>
    </citation>
    <scope>CATALYTIC ACTIVITY</scope>
    <scope>FUNCTION</scope>
    <scope>ACTIVITY REGULATION</scope>
</reference>
<organism>
    <name type="scientific">Bacillus subtilis (strain 168)</name>
    <dbReference type="NCBI Taxonomy" id="224308"/>
    <lineage>
        <taxon>Bacteria</taxon>
        <taxon>Bacillati</taxon>
        <taxon>Bacillota</taxon>
        <taxon>Bacilli</taxon>
        <taxon>Bacillales</taxon>
        <taxon>Bacillaceae</taxon>
        <taxon>Bacillus</taxon>
    </lineage>
</organism>
<gene>
    <name type="primary">clpY</name>
    <name type="synonym">codX</name>
    <name type="synonym">hslU</name>
    <name type="ordered locus">BSU16160</name>
</gene>
<keyword id="KW-0067">ATP-binding</keyword>
<keyword id="KW-0143">Chaperone</keyword>
<keyword id="KW-0963">Cytoplasm</keyword>
<keyword id="KW-0547">Nucleotide-binding</keyword>
<keyword id="KW-1185">Reference proteome</keyword>
<protein>
    <recommendedName>
        <fullName>ATP-dependent protease ATPase subunit ClpY</fullName>
    </recommendedName>
</protein>
<dbReference type="EMBL" id="U13634">
    <property type="protein sequence ID" value="AAB03371.1"/>
    <property type="molecule type" value="Genomic_DNA"/>
</dbReference>
<dbReference type="EMBL" id="AL009126">
    <property type="protein sequence ID" value="CAB13489.1"/>
    <property type="molecule type" value="Genomic_DNA"/>
</dbReference>
<dbReference type="PIR" id="E69601">
    <property type="entry name" value="E69601"/>
</dbReference>
<dbReference type="RefSeq" id="NP_389498.1">
    <property type="nucleotide sequence ID" value="NC_000964.3"/>
</dbReference>
<dbReference type="RefSeq" id="WP_003245556.1">
    <property type="nucleotide sequence ID" value="NZ_OZ025638.1"/>
</dbReference>
<dbReference type="SMR" id="P39778"/>
<dbReference type="FunCoup" id="P39778">
    <property type="interactions" value="74"/>
</dbReference>
<dbReference type="IntAct" id="P39778">
    <property type="interactions" value="1"/>
</dbReference>
<dbReference type="MINT" id="P39778"/>
<dbReference type="STRING" id="224308.BSU16160"/>
<dbReference type="jPOST" id="P39778"/>
<dbReference type="PaxDb" id="224308-BSU16160"/>
<dbReference type="EnsemblBacteria" id="CAB13489">
    <property type="protein sequence ID" value="CAB13489"/>
    <property type="gene ID" value="BSU_16160"/>
</dbReference>
<dbReference type="GeneID" id="936301"/>
<dbReference type="KEGG" id="bsu:BSU16160"/>
<dbReference type="PATRIC" id="fig|224308.179.peg.1756"/>
<dbReference type="eggNOG" id="COG1220">
    <property type="taxonomic scope" value="Bacteria"/>
</dbReference>
<dbReference type="InParanoid" id="P39778"/>
<dbReference type="OrthoDB" id="9804062at2"/>
<dbReference type="PhylomeDB" id="P39778"/>
<dbReference type="BioCyc" id="BSUB:BSU16160-MONOMER"/>
<dbReference type="Proteomes" id="UP000001570">
    <property type="component" value="Chromosome"/>
</dbReference>
<dbReference type="GO" id="GO:0009376">
    <property type="term" value="C:HslUV protease complex"/>
    <property type="evidence" value="ECO:0000318"/>
    <property type="project" value="GO_Central"/>
</dbReference>
<dbReference type="GO" id="GO:0005524">
    <property type="term" value="F:ATP binding"/>
    <property type="evidence" value="ECO:0000318"/>
    <property type="project" value="GO_Central"/>
</dbReference>
<dbReference type="GO" id="GO:0016887">
    <property type="term" value="F:ATP hydrolysis activity"/>
    <property type="evidence" value="ECO:0000318"/>
    <property type="project" value="GO_Central"/>
</dbReference>
<dbReference type="GO" id="GO:0008233">
    <property type="term" value="F:peptidase activity"/>
    <property type="evidence" value="ECO:0007669"/>
    <property type="project" value="InterPro"/>
</dbReference>
<dbReference type="GO" id="GO:0036402">
    <property type="term" value="F:proteasome-activating activity"/>
    <property type="evidence" value="ECO:0007669"/>
    <property type="project" value="UniProtKB-UniRule"/>
</dbReference>
<dbReference type="GO" id="GO:0043335">
    <property type="term" value="P:protein unfolding"/>
    <property type="evidence" value="ECO:0007669"/>
    <property type="project" value="UniProtKB-UniRule"/>
</dbReference>
<dbReference type="GO" id="GO:0051603">
    <property type="term" value="P:proteolysis involved in protein catabolic process"/>
    <property type="evidence" value="ECO:0000318"/>
    <property type="project" value="GO_Central"/>
</dbReference>
<dbReference type="CDD" id="cd19498">
    <property type="entry name" value="RecA-like_HslU"/>
    <property type="match status" value="1"/>
</dbReference>
<dbReference type="FunFam" id="3.40.50.300:FF:000213">
    <property type="entry name" value="ATP-dependent protease ATPase subunit HslU"/>
    <property type="match status" value="1"/>
</dbReference>
<dbReference type="FunFam" id="3.40.50.300:FF:000220">
    <property type="entry name" value="ATP-dependent protease ATPase subunit HslU"/>
    <property type="match status" value="1"/>
</dbReference>
<dbReference type="Gene3D" id="1.10.8.60">
    <property type="match status" value="1"/>
</dbReference>
<dbReference type="Gene3D" id="3.40.50.300">
    <property type="entry name" value="P-loop containing nucleotide triphosphate hydrolases"/>
    <property type="match status" value="2"/>
</dbReference>
<dbReference type="HAMAP" id="MF_00249">
    <property type="entry name" value="HslU"/>
    <property type="match status" value="1"/>
</dbReference>
<dbReference type="InterPro" id="IPR003593">
    <property type="entry name" value="AAA+_ATPase"/>
</dbReference>
<dbReference type="InterPro" id="IPR050052">
    <property type="entry name" value="ATP-dep_Clp_protease_ClpX"/>
</dbReference>
<dbReference type="InterPro" id="IPR003959">
    <property type="entry name" value="ATPase_AAA_core"/>
</dbReference>
<dbReference type="InterPro" id="IPR019489">
    <property type="entry name" value="Clp_ATPase_C"/>
</dbReference>
<dbReference type="InterPro" id="IPR004491">
    <property type="entry name" value="HslU"/>
</dbReference>
<dbReference type="InterPro" id="IPR027417">
    <property type="entry name" value="P-loop_NTPase"/>
</dbReference>
<dbReference type="NCBIfam" id="TIGR00390">
    <property type="entry name" value="hslU"/>
    <property type="match status" value="1"/>
</dbReference>
<dbReference type="NCBIfam" id="NF003544">
    <property type="entry name" value="PRK05201.1"/>
    <property type="match status" value="1"/>
</dbReference>
<dbReference type="PANTHER" id="PTHR48102">
    <property type="entry name" value="ATP-DEPENDENT CLP PROTEASE ATP-BINDING SUBUNIT CLPX-LIKE, MITOCHONDRIAL-RELATED"/>
    <property type="match status" value="1"/>
</dbReference>
<dbReference type="PANTHER" id="PTHR48102:SF3">
    <property type="entry name" value="ATP-DEPENDENT PROTEASE ATPASE SUBUNIT HSLU"/>
    <property type="match status" value="1"/>
</dbReference>
<dbReference type="Pfam" id="PF00004">
    <property type="entry name" value="AAA"/>
    <property type="match status" value="1"/>
</dbReference>
<dbReference type="Pfam" id="PF07724">
    <property type="entry name" value="AAA_2"/>
    <property type="match status" value="1"/>
</dbReference>
<dbReference type="Pfam" id="PF10431">
    <property type="entry name" value="ClpB_D2-small"/>
    <property type="match status" value="1"/>
</dbReference>
<dbReference type="SMART" id="SM00382">
    <property type="entry name" value="AAA"/>
    <property type="match status" value="1"/>
</dbReference>
<dbReference type="SMART" id="SM01086">
    <property type="entry name" value="ClpB_D2-small"/>
    <property type="match status" value="1"/>
</dbReference>
<dbReference type="SUPFAM" id="SSF52540">
    <property type="entry name" value="P-loop containing nucleoside triphosphate hydrolases"/>
    <property type="match status" value="1"/>
</dbReference>
<feature type="chain" id="PRO_0000160476" description="ATP-dependent protease ATPase subunit ClpY">
    <location>
        <begin position="1"/>
        <end position="467"/>
    </location>
</feature>
<feature type="binding site" evidence="1">
    <location>
        <position position="20"/>
    </location>
    <ligand>
        <name>ATP</name>
        <dbReference type="ChEBI" id="CHEBI:30616"/>
    </ligand>
</feature>
<feature type="binding site" evidence="1">
    <location>
        <begin position="62"/>
        <end position="67"/>
    </location>
    <ligand>
        <name>ATP</name>
        <dbReference type="ChEBI" id="CHEBI:30616"/>
    </ligand>
</feature>
<feature type="binding site" evidence="1">
    <location>
        <position position="279"/>
    </location>
    <ligand>
        <name>ATP</name>
        <dbReference type="ChEBI" id="CHEBI:30616"/>
    </ligand>
</feature>
<feature type="binding site" evidence="1">
    <location>
        <position position="345"/>
    </location>
    <ligand>
        <name>ATP</name>
        <dbReference type="ChEBI" id="CHEBI:30616"/>
    </ligand>
</feature>
<feature type="binding site" evidence="1">
    <location>
        <position position="417"/>
    </location>
    <ligand>
        <name>ATP</name>
        <dbReference type="ChEBI" id="CHEBI:30616"/>
    </ligand>
</feature>
<comment type="function">
    <text evidence="2">ATPase subunit of a proteasome-like degradation complex; this subunit has chaperone activity.</text>
</comment>
<comment type="activity regulation">
    <text evidence="2">ATPase activity is much induced upon complex formation with ClpQ.</text>
</comment>
<comment type="subunit">
    <text evidence="1">A double ring-shaped homohexamer of ClpQ is capped on each side by a ring-shaped ClpY homohexamer. The assembly of the ClpQ/ClpY complex is dependent on binding of ATP (By similarity).</text>
</comment>
<comment type="subcellular location">
    <subcellularLocation>
        <location evidence="1">Cytoplasm</location>
    </subcellularLocation>
</comment>
<comment type="similarity">
    <text evidence="3">Belongs to the ClpX chaperone family. HslU subfamily.</text>
</comment>